<protein>
    <recommendedName>
        <fullName>Glucocorticoid receptor</fullName>
        <shortName>GR</shortName>
    </recommendedName>
    <alternativeName>
        <fullName>Nuclear receptor subfamily 3 group C member 1</fullName>
    </alternativeName>
</protein>
<sequence>MDPKESLTPPSREEIPSSVLGRERAHVMDFYKSLRGGTPVKVSAASPSLAAVSQPDSKQQRLAVDFPKGSGSNAQQPDLSKAVSLSMGLYMGETETKVMGSDLGFPQQGQISLSSGETDFRLLEESIANLSRSTSVPENPKSSASAAGPAAPAEKAFPKTHSDGAPEQPNVKGQTGTNGGNVKLFTTDQSTFDIWRKKLQDLELPSGSPGKETSESPWSSDLLIDENCLLSPLAGEEDPFLLEGSSTEDCKPLVLPDTKPKVKDNGELILPSPNSVPLPQVKTEKEDFIELCTPGVIKQEKLGPAYCQASFSGANIIGGKMSAISVHGVSTSGGQLYHYDMNTAASLSKQQEQKPLFNVIPPIPVGSENWNRCQGSGDDNLTSLGTLNFSGRSVFSNGYSSPGMRPDVSSPPSSSSAATGPPPKLCLVCSDEASGCHYGVLTCGSCKVFFKRAVEGQHNYLCAGRNDCIIDKIRRKNCPACRYRKCLQAGMNLEARKTKKKIKGIQQATTGVSQETSENSANKTIVPATLPQLTPTLVSLLEVIEPEVLYAGYDSSIPDSTWRIMTALNMLGGRQVIAAVKWAKAIPGFRNLHLDDQMTLLQYSWMFLMVFALGWRSYRQSSASLLCFAPDLVINEQRMALPCMYDQCRHMLYVSSELQRLQVSYEEYLCMKTLLLLSSVPKDGLKSQELFDEIRMTYIKELGKAIVKREGNSSQNWQRFYQLTKLLDSMHDVVENLLNYCFQTFLDKTMSIEFPEMLAEIITNQLPKYSSGNIKKLLFHQK</sequence>
<comment type="function">
    <text evidence="2 4">Receptor for glucocorticoids (GC). Has a dual mode of action: as a transcription factor that binds to glucocorticoid response elements (GRE), both for nuclear and mitochondrial DNA, and as a modulator of other transcription factors. Affects inflammatory responses, cellular proliferation and differentiation in target tissues. Involved in chromatin remodeling. Plays a role in rapid mRNA degradation by binding to the 5' UTR of target mRNAs and interacting with PNRC2 in a ligand-dependent manner which recruits the RNA helicase UPF1 and the mRNA-decapping enzyme DCP1A, leading to RNA decay. Could act as a coactivator for STAT5-dependent transcription upon growth hormone (GH) stimulation and could reveal an essential role of hepatic GR in the control of body growth. Mediates glucocorticoid-induced apoptosis. Promotes accurate chromosome segregation during mitosis. May act as a tumor suppressor. May play a negative role in adipogenesis through the regulation of lipolytic and antilipogenic gene expression.</text>
</comment>
<comment type="subunit">
    <text evidence="2 3 4">Heteromultimeric cytoplasmic complex with HSP90AA1, HSPA1A/HSPA1B, and FKBP5 or another immunophilin such as PPID, STIP1, or the immunophilin homolog PPP5C. Upon ligand binding FKBP5 dissociates from the complex and FKBP4 takes its place, thereby linking the complex to dynein and mediating transport to the nucleus, where the complex dissociates. Probably forms a complex composed of chaperones HSP90 and HSP70, co-chaperones CDC37, PPP5C, TSC1 and client protein TSC2, CDK4, AKT, RAF1 and NR3C1; this complex does not contain co-chaperones STIP1/HOP and PTGES3/p23. Directly interacts with UNC45A. Binds to DNA as a homodimer, and as heterodimer with NR3C2 or the retinoid X receptor. Binds STAT5A and STAT5B homodimers and heterodimers. Interacts with NRIP1, POU2F1, POU2F2 and TRIM28. Interacts with several coactivator complexes, including the SMARCA4 complex, CREBBP/EP300, TADA2L (Ada complex) and p160 coactivators such as NCOA2 and NCOA6. Interaction with BAG1 inhibits transactivation. Interacts with HEXIM1 and TGFB1I1. Interacts with NCOA1. Interacts with NCOA3, SMARCA4, SMARCC1, SMARCD1, and SMARCE1. Interacts with CLOCK, CRY1 and CRY2 in a ligand-dependent fashion. Interacts with CIART. Interacts with RWDD3. Interacts with UBE2I/UBC9 and this interaction is enhanced in the presence of RWDD3. Interacts with GRIP1. Interacts with NR4A3 (via nuclear receptor DNA-binding domain), represses transcription activity of NR4A3 on the POMC promoter Nur response element (NurRE). Directly interacts with PNRC2 to attract and form a complex with UPF1 and DCP1A; the interaction leads to rapid mRNA degradation. Interacts with GSK3B. Interacts with FNIP1 and FNIP2. Interacts (via C-terminus) with HNRNPU (via C-terminus). Interacts with MCM3AP (By similarity). Interacts (via domain NR LBD) with HSP90AA1 and HSP90AB1 (By similarity). In the absence of hormonal ligand, interacts with TACC1 (By similarity). Interacts (via NR LBD domain) with ZNF764 (via KRAB domain); the interaction regulates transcription factor activity of NR3C1 by directing its actions toward certain biologic pathways (By similarity).</text>
</comment>
<comment type="subcellular location">
    <subcellularLocation>
        <location evidence="2">Cytoplasm</location>
    </subcellularLocation>
    <subcellularLocation>
        <location evidence="2">Nucleus</location>
    </subcellularLocation>
    <subcellularLocation>
        <location evidence="2">Mitochondrion</location>
    </subcellularLocation>
    <subcellularLocation>
        <location evidence="2">Cytoplasm</location>
        <location evidence="2">Cytoskeleton</location>
        <location evidence="2">Spindle</location>
    </subcellularLocation>
    <subcellularLocation>
        <location evidence="2">Cytoplasm</location>
        <location evidence="2">Cytoskeleton</location>
        <location evidence="2">Microtubule organizing center</location>
        <location evidence="2">Centrosome</location>
    </subcellularLocation>
    <subcellularLocation>
        <location evidence="4">Chromosome</location>
    </subcellularLocation>
    <subcellularLocation>
        <location evidence="4">Nucleus</location>
        <location evidence="4">Nucleoplasm</location>
    </subcellularLocation>
    <text evidence="2 4">After ligand activation, translocates from the cytoplasm to the nucleus (By similarity). The hormone-occupied receptor undergoes rapid exchange between chromatin and the nucleoplasmic compartment. In the presence of NR1D1 shows a time-dependent subcellular localization, localizing to the cytoplasm at ZT8 and to the nucleus at ZT20. Lacks this diurnal pattern of localization in the absence of NR1D1, localizing to both nucleus and the cytoplasm at ZT8 and ZT20. Upon dexamethasone binding associates with the glucocorticoid response elements of target genes (By similarity).</text>
</comment>
<comment type="domain">
    <text evidence="2">Composed of three domains: a modulating N-terminal domain, a DNA-binding domain and a C-terminal ligand-binding domain. The ligand-binding domain is required for correct chromosome segregation during mitosis although ligand binding is not required.</text>
</comment>
<comment type="PTM">
    <text evidence="1">Acetylation by CLOCK reduces its binding to glucocorticoid response elements and its transcriptional activity.</text>
</comment>
<comment type="PTM">
    <text evidence="2">Increased proteasome-mediated degradation in response to glucocorticoids.</text>
</comment>
<comment type="PTM">
    <text evidence="2 4">Phosphorylated in the absence of hormone; becomes hyperphosphorylated in the presence of glucocorticoid. The Ser-208, Ser-231 and Ser-410-phosphorylated forms are mainly cytoplasmic, and the Ser-216-phosphorylated form is nuclear. Phosphorylation at Ser-216 increases transcriptional activity. Phosphorylation at Ser-208, Ser-231 and Ser-410 decreases signaling capacity. Phosphorylation at Ser-410 may protect from glucocorticoid-induced apoptosis. Phosphorylation at Ser-208 and Ser-216 is not required in regulation of chromosome segregation. May be dephosphorylated by PPP5C, attenuates NR3C1 action.</text>
</comment>
<comment type="PTM">
    <text evidence="4">Ubiquitinated by UBR5, leading to its degradation: UBR5 specifically recognizes and binds ligand-bound NR3C1 when it is not associated with coactivators (NCOAs) (By similarity). In presence of NCOAs, the UBR5-degron is not accessible, preventing its ubiquitination and degradation (By similarity).</text>
</comment>
<comment type="PTM">
    <text evidence="3">Sumoylation at Lys-282 and Lys-298 negatively regulates its transcriptional activity. Sumoylation at Lys-708 positively regulates its transcriptional activity in the presence of RWDD3. Sumoylation at Lys-282 and Lys-298 is dispensable whereas sumoylation at Lys-708 is critical for the stimulatory effect of RWDD3 on its transcriptional activity. Heat shock increases sumoylation in a RWDD3-dependent manner.</text>
</comment>
<comment type="similarity">
    <text evidence="8">Belongs to the nuclear hormone receptor family. NR3 subfamily.</text>
</comment>
<gene>
    <name type="primary">NR3C1</name>
    <name type="synonym">GRL</name>
</gene>
<name>GCR_PIG</name>
<proteinExistence type="evidence at transcript level"/>
<feature type="chain" id="PRO_0000053671" description="Glucocorticoid receptor">
    <location>
        <begin position="1"/>
        <end position="782"/>
    </location>
</feature>
<feature type="domain" description="NR LBD" evidence="6">
    <location>
        <begin position="529"/>
        <end position="763"/>
    </location>
</feature>
<feature type="DNA-binding region" description="Nuclear receptor" evidence="5">
    <location>
        <begin position="426"/>
        <end position="491"/>
    </location>
</feature>
<feature type="zinc finger region" description="NR C4-type" evidence="5">
    <location>
        <begin position="426"/>
        <end position="446"/>
    </location>
</feature>
<feature type="zinc finger region" description="NR C4-type" evidence="5">
    <location>
        <begin position="462"/>
        <end position="486"/>
    </location>
</feature>
<feature type="region of interest" description="Modulating">
    <location>
        <begin position="1"/>
        <end position="425"/>
    </location>
</feature>
<feature type="region of interest" description="Disordered" evidence="7">
    <location>
        <begin position="1"/>
        <end position="20"/>
    </location>
</feature>
<feature type="region of interest" description="Disordered" evidence="7">
    <location>
        <begin position="48"/>
        <end position="79"/>
    </location>
</feature>
<feature type="region of interest" description="Disordered" evidence="7">
    <location>
        <begin position="130"/>
        <end position="184"/>
    </location>
</feature>
<feature type="region of interest" description="Interaction with CLOCK" evidence="1">
    <location>
        <begin position="490"/>
        <end position="782"/>
    </location>
</feature>
<feature type="region of interest" description="Hinge">
    <location>
        <begin position="492"/>
        <end position="528"/>
    </location>
</feature>
<feature type="region of interest" description="Interaction with CRY1" evidence="1">
    <location>
        <begin position="537"/>
        <end position="702"/>
    </location>
</feature>
<feature type="compositionally biased region" description="Low complexity" evidence="7">
    <location>
        <begin position="140"/>
        <end position="155"/>
    </location>
</feature>
<feature type="modified residue" description="Phosphothreonine" evidence="2">
    <location>
        <position position="8"/>
    </location>
</feature>
<feature type="modified residue" description="Omega-N-methylarginine" evidence="4">
    <location>
        <position position="24"/>
    </location>
</feature>
<feature type="modified residue" description="Phosphoserine" evidence="2">
    <location>
        <position position="46"/>
    </location>
</feature>
<feature type="modified residue" description="Phosphoserine" evidence="4">
    <location>
        <position position="114"/>
    </location>
</feature>
<feature type="modified residue" description="Phosphoserine" evidence="2">
    <location>
        <position position="135"/>
    </location>
</feature>
<feature type="modified residue" description="Phosphoserine" evidence="4">
    <location>
        <position position="142"/>
    </location>
</feature>
<feature type="modified residue" description="Phosphoserine" evidence="2">
    <location>
        <position position="208"/>
    </location>
</feature>
<feature type="modified residue" description="Phosphoserine" evidence="2">
    <location>
        <position position="216"/>
    </location>
</feature>
<feature type="modified residue" description="Phosphoserine" evidence="2">
    <location>
        <position position="231"/>
    </location>
</feature>
<feature type="modified residue" description="Phosphoserine" evidence="2">
    <location>
        <position position="272"/>
    </location>
</feature>
<feature type="modified residue" description="Phosphoserine" evidence="4">
    <location>
        <position position="312"/>
    </location>
</feature>
<feature type="modified residue" description="Phosphoserine" evidence="2">
    <location>
        <position position="410"/>
    </location>
</feature>
<feature type="modified residue" description="N6-acetyllysine" evidence="2">
    <location>
        <position position="485"/>
    </location>
</feature>
<feature type="modified residue" description="N6-acetyllysine" evidence="2">
    <location>
        <position position="497"/>
    </location>
</feature>
<feature type="modified residue" description="N6-acetyllysine" evidence="2">
    <location>
        <position position="499"/>
    </location>
</feature>
<feature type="modified residue" description="N6-acetyllysine" evidence="2">
    <location>
        <position position="500"/>
    </location>
</feature>
<feature type="cross-link" description="Glycyl lysine isopeptide (Lys-Gly) (interchain with G-Cter in SUMO2)" evidence="2">
    <location>
        <position position="263"/>
    </location>
</feature>
<feature type="cross-link" description="Glycyl lysine isopeptide (Lys-Gly) (interchain with G-Cter in SUMO); alternate" evidence="2">
    <location>
        <position position="282"/>
    </location>
</feature>
<feature type="cross-link" description="Glycyl lysine isopeptide (Lys-Gly) (interchain with G-Cter in SUMO2); alternate" evidence="2">
    <location>
        <position position="282"/>
    </location>
</feature>
<feature type="cross-link" description="Glycyl lysine isopeptide (Lys-Gly) (interchain with G-Cter in SUMO); alternate" evidence="2">
    <location>
        <position position="298"/>
    </location>
</feature>
<feature type="cross-link" description="Glycyl lysine isopeptide (Lys-Gly) (interchain with G-Cter in SUMO2); alternate" evidence="2">
    <location>
        <position position="298"/>
    </location>
</feature>
<feature type="cross-link" description="Glycyl lysine isopeptide (Lys-Gly) (interchain with G-Cter in ubiquitin)" evidence="4">
    <location>
        <position position="424"/>
    </location>
</feature>
<feature type="cross-link" description="Glycyl lysine isopeptide (Lys-Gly) (interchain with G-Cter in SUMO)" evidence="2">
    <location>
        <position position="708"/>
    </location>
</feature>
<feature type="sequence conflict" description="In Ref. 2; AAF66595/CAC10271." evidence="8" ref="2">
    <original>A</original>
    <variation>S</variation>
    <location>
        <position position="45"/>
    </location>
</feature>
<feature type="sequence conflict" description="In Ref. 3; AAB53274." evidence="8" ref="3">
    <original>V</original>
    <variation>A</variation>
    <location>
        <position position="610"/>
    </location>
</feature>
<evidence type="ECO:0000250" key="1"/>
<evidence type="ECO:0000250" key="2">
    <source>
        <dbReference type="UniProtKB" id="P04150"/>
    </source>
</evidence>
<evidence type="ECO:0000250" key="3">
    <source>
        <dbReference type="UniProtKB" id="P06536"/>
    </source>
</evidence>
<evidence type="ECO:0000250" key="4">
    <source>
        <dbReference type="UniProtKB" id="P06537"/>
    </source>
</evidence>
<evidence type="ECO:0000255" key="5">
    <source>
        <dbReference type="PROSITE-ProRule" id="PRU00407"/>
    </source>
</evidence>
<evidence type="ECO:0000255" key="6">
    <source>
        <dbReference type="PROSITE-ProRule" id="PRU01189"/>
    </source>
</evidence>
<evidence type="ECO:0000256" key="7">
    <source>
        <dbReference type="SAM" id="MobiDB-lite"/>
    </source>
</evidence>
<evidence type="ECO:0000305" key="8"/>
<dbReference type="EMBL" id="AY779185">
    <property type="protein sequence ID" value="AAV66324.1"/>
    <property type="molecule type" value="mRNA"/>
</dbReference>
<dbReference type="EMBL" id="AF141371">
    <property type="protein sequence ID" value="AAF66595.1"/>
    <property type="molecule type" value="mRNA"/>
</dbReference>
<dbReference type="EMBL" id="AJ296022">
    <property type="protein sequence ID" value="CAC10271.1"/>
    <property type="molecule type" value="mRNA"/>
</dbReference>
<dbReference type="EMBL" id="U88894">
    <property type="protein sequence ID" value="AAB53274.1"/>
    <property type="molecule type" value="mRNA"/>
</dbReference>
<dbReference type="RefSeq" id="NP_001008481.1">
    <property type="nucleotide sequence ID" value="NM_001008481.1"/>
</dbReference>
<dbReference type="SMR" id="Q9N1U3"/>
<dbReference type="FunCoup" id="Q9N1U3">
    <property type="interactions" value="354"/>
</dbReference>
<dbReference type="STRING" id="9823.ENSSSCP00000046572"/>
<dbReference type="BindingDB" id="Q9N1U3"/>
<dbReference type="ChEMBL" id="CHEMBL4295956"/>
<dbReference type="DrugCentral" id="Q9N1U3"/>
<dbReference type="PaxDb" id="9823-ENSSSCP00000015324"/>
<dbReference type="PeptideAtlas" id="Q9N1U3"/>
<dbReference type="GeneID" id="396740"/>
<dbReference type="KEGG" id="ssc:396740"/>
<dbReference type="CTD" id="2908"/>
<dbReference type="eggNOG" id="KOG3575">
    <property type="taxonomic scope" value="Eukaryota"/>
</dbReference>
<dbReference type="InParanoid" id="Q9N1U3"/>
<dbReference type="OrthoDB" id="5789523at2759"/>
<dbReference type="Proteomes" id="UP000008227">
    <property type="component" value="Unplaced"/>
</dbReference>
<dbReference type="Proteomes" id="UP000314985">
    <property type="component" value="Unplaced"/>
</dbReference>
<dbReference type="Proteomes" id="UP000694570">
    <property type="component" value="Unplaced"/>
</dbReference>
<dbReference type="Proteomes" id="UP000694571">
    <property type="component" value="Unplaced"/>
</dbReference>
<dbReference type="Proteomes" id="UP000694720">
    <property type="component" value="Unplaced"/>
</dbReference>
<dbReference type="Proteomes" id="UP000694722">
    <property type="component" value="Unplaced"/>
</dbReference>
<dbReference type="Proteomes" id="UP000694723">
    <property type="component" value="Unplaced"/>
</dbReference>
<dbReference type="Proteomes" id="UP000694724">
    <property type="component" value="Unplaced"/>
</dbReference>
<dbReference type="Proteomes" id="UP000694725">
    <property type="component" value="Unplaced"/>
</dbReference>
<dbReference type="Proteomes" id="UP000694726">
    <property type="component" value="Unplaced"/>
</dbReference>
<dbReference type="Proteomes" id="UP000694727">
    <property type="component" value="Unplaced"/>
</dbReference>
<dbReference type="Proteomes" id="UP000694728">
    <property type="component" value="Unplaced"/>
</dbReference>
<dbReference type="GO" id="GO:0005813">
    <property type="term" value="C:centrosome"/>
    <property type="evidence" value="ECO:0007669"/>
    <property type="project" value="UniProtKB-SubCell"/>
</dbReference>
<dbReference type="GO" id="GO:0000785">
    <property type="term" value="C:chromatin"/>
    <property type="evidence" value="ECO:0000318"/>
    <property type="project" value="GO_Central"/>
</dbReference>
<dbReference type="GO" id="GO:0005737">
    <property type="term" value="C:cytoplasm"/>
    <property type="evidence" value="ECO:0000250"/>
    <property type="project" value="UniProtKB"/>
</dbReference>
<dbReference type="GO" id="GO:0005739">
    <property type="term" value="C:mitochondrion"/>
    <property type="evidence" value="ECO:0007669"/>
    <property type="project" value="UniProtKB-SubCell"/>
</dbReference>
<dbReference type="GO" id="GO:0016607">
    <property type="term" value="C:nuclear speck"/>
    <property type="evidence" value="ECO:0000250"/>
    <property type="project" value="UniProtKB"/>
</dbReference>
<dbReference type="GO" id="GO:0005634">
    <property type="term" value="C:nucleus"/>
    <property type="evidence" value="ECO:0000250"/>
    <property type="project" value="UniProtKB"/>
</dbReference>
<dbReference type="GO" id="GO:0005819">
    <property type="term" value="C:spindle"/>
    <property type="evidence" value="ECO:0007669"/>
    <property type="project" value="UniProtKB-SubCell"/>
</dbReference>
<dbReference type="GO" id="GO:0003700">
    <property type="term" value="F:DNA-binding transcription factor activity"/>
    <property type="evidence" value="ECO:0000250"/>
    <property type="project" value="UniProtKB"/>
</dbReference>
<dbReference type="GO" id="GO:0034056">
    <property type="term" value="F:estrogen response element binding"/>
    <property type="evidence" value="ECO:0000318"/>
    <property type="project" value="GO_Central"/>
</dbReference>
<dbReference type="GO" id="GO:0004883">
    <property type="term" value="F:nuclear glucocorticoid receptor activity"/>
    <property type="evidence" value="ECO:0007669"/>
    <property type="project" value="InterPro"/>
</dbReference>
<dbReference type="GO" id="GO:0004879">
    <property type="term" value="F:nuclear receptor activity"/>
    <property type="evidence" value="ECO:0000250"/>
    <property type="project" value="UniProtKB"/>
</dbReference>
<dbReference type="GO" id="GO:0005496">
    <property type="term" value="F:steroid binding"/>
    <property type="evidence" value="ECO:0000250"/>
    <property type="project" value="UniProtKB"/>
</dbReference>
<dbReference type="GO" id="GO:1990239">
    <property type="term" value="F:steroid hormone binding"/>
    <property type="evidence" value="ECO:0000250"/>
    <property type="project" value="UniProtKB"/>
</dbReference>
<dbReference type="GO" id="GO:0008270">
    <property type="term" value="F:zinc ion binding"/>
    <property type="evidence" value="ECO:0007669"/>
    <property type="project" value="UniProtKB-KW"/>
</dbReference>
<dbReference type="GO" id="GO:0071385">
    <property type="term" value="P:cellular response to glucocorticoid stimulus"/>
    <property type="evidence" value="ECO:0000250"/>
    <property type="project" value="UniProtKB"/>
</dbReference>
<dbReference type="GO" id="GO:0071383">
    <property type="term" value="P:cellular response to steroid hormone stimulus"/>
    <property type="evidence" value="ECO:0000250"/>
    <property type="project" value="UniProtKB"/>
</dbReference>
<dbReference type="GO" id="GO:0006325">
    <property type="term" value="P:chromatin organization"/>
    <property type="evidence" value="ECO:0007669"/>
    <property type="project" value="UniProtKB-KW"/>
</dbReference>
<dbReference type="GO" id="GO:0030518">
    <property type="term" value="P:nuclear receptor-mediated steroid hormone signaling pathway"/>
    <property type="evidence" value="ECO:0000318"/>
    <property type="project" value="GO_Central"/>
</dbReference>
<dbReference type="GO" id="GO:0045944">
    <property type="term" value="P:positive regulation of transcription by RNA polymerase II"/>
    <property type="evidence" value="ECO:0000250"/>
    <property type="project" value="UniProtKB"/>
</dbReference>
<dbReference type="GO" id="GO:0006357">
    <property type="term" value="P:regulation of transcription by RNA polymerase II"/>
    <property type="evidence" value="ECO:0000318"/>
    <property type="project" value="GO_Central"/>
</dbReference>
<dbReference type="CDD" id="cd07172">
    <property type="entry name" value="NR_DBD_GR_PR"/>
    <property type="match status" value="1"/>
</dbReference>
<dbReference type="CDD" id="cd07076">
    <property type="entry name" value="NR_LBD_GR"/>
    <property type="match status" value="1"/>
</dbReference>
<dbReference type="FunFam" id="1.10.565.10:FF:000004">
    <property type="entry name" value="Androgen receptor variant"/>
    <property type="match status" value="1"/>
</dbReference>
<dbReference type="FunFam" id="3.30.50.10:FF:000022">
    <property type="entry name" value="glucocorticoid receptor isoform X1"/>
    <property type="match status" value="1"/>
</dbReference>
<dbReference type="Gene3D" id="3.30.50.10">
    <property type="entry name" value="Erythroid Transcription Factor GATA-1, subunit A"/>
    <property type="match status" value="1"/>
</dbReference>
<dbReference type="Gene3D" id="1.10.565.10">
    <property type="entry name" value="Retinoid X Receptor"/>
    <property type="match status" value="1"/>
</dbReference>
<dbReference type="InterPro" id="IPR001409">
    <property type="entry name" value="Glcrtcd_rcpt"/>
</dbReference>
<dbReference type="InterPro" id="IPR035500">
    <property type="entry name" value="NHR-like_dom_sf"/>
</dbReference>
<dbReference type="InterPro" id="IPR000536">
    <property type="entry name" value="Nucl_hrmn_rcpt_lig-bd"/>
</dbReference>
<dbReference type="InterPro" id="IPR050200">
    <property type="entry name" value="Nuclear_hormone_rcpt_NR3"/>
</dbReference>
<dbReference type="InterPro" id="IPR001723">
    <property type="entry name" value="Nuclear_hrmn_rcpt"/>
</dbReference>
<dbReference type="InterPro" id="IPR001628">
    <property type="entry name" value="Znf_hrmn_rcpt"/>
</dbReference>
<dbReference type="InterPro" id="IPR013088">
    <property type="entry name" value="Znf_NHR/GATA"/>
</dbReference>
<dbReference type="PANTHER" id="PTHR48092">
    <property type="entry name" value="KNIRPS-RELATED PROTEIN-RELATED"/>
    <property type="match status" value="1"/>
</dbReference>
<dbReference type="Pfam" id="PF02155">
    <property type="entry name" value="GCR"/>
    <property type="match status" value="1"/>
</dbReference>
<dbReference type="Pfam" id="PF00104">
    <property type="entry name" value="Hormone_recep"/>
    <property type="match status" value="1"/>
</dbReference>
<dbReference type="Pfam" id="PF00105">
    <property type="entry name" value="zf-C4"/>
    <property type="match status" value="1"/>
</dbReference>
<dbReference type="PRINTS" id="PR00528">
    <property type="entry name" value="GLCORTICOIDR"/>
</dbReference>
<dbReference type="PRINTS" id="PR00398">
    <property type="entry name" value="STRDHORMONER"/>
</dbReference>
<dbReference type="PRINTS" id="PR00047">
    <property type="entry name" value="STROIDFINGER"/>
</dbReference>
<dbReference type="SMART" id="SM00430">
    <property type="entry name" value="HOLI"/>
    <property type="match status" value="1"/>
</dbReference>
<dbReference type="SMART" id="SM00399">
    <property type="entry name" value="ZnF_C4"/>
    <property type="match status" value="1"/>
</dbReference>
<dbReference type="SUPFAM" id="SSF57716">
    <property type="entry name" value="Glucocorticoid receptor-like (DNA-binding domain)"/>
    <property type="match status" value="1"/>
</dbReference>
<dbReference type="SUPFAM" id="SSF48508">
    <property type="entry name" value="Nuclear receptor ligand-binding domain"/>
    <property type="match status" value="1"/>
</dbReference>
<dbReference type="PROSITE" id="PS51843">
    <property type="entry name" value="NR_LBD"/>
    <property type="match status" value="1"/>
</dbReference>
<dbReference type="PROSITE" id="PS00031">
    <property type="entry name" value="NUCLEAR_REC_DBD_1"/>
    <property type="match status" value="1"/>
</dbReference>
<dbReference type="PROSITE" id="PS51030">
    <property type="entry name" value="NUCLEAR_REC_DBD_2"/>
    <property type="match status" value="1"/>
</dbReference>
<organism>
    <name type="scientific">Sus scrofa</name>
    <name type="common">Pig</name>
    <dbReference type="NCBI Taxonomy" id="9823"/>
    <lineage>
        <taxon>Eukaryota</taxon>
        <taxon>Metazoa</taxon>
        <taxon>Chordata</taxon>
        <taxon>Craniata</taxon>
        <taxon>Vertebrata</taxon>
        <taxon>Euteleostomi</taxon>
        <taxon>Mammalia</taxon>
        <taxon>Eutheria</taxon>
        <taxon>Laurasiatheria</taxon>
        <taxon>Artiodactyla</taxon>
        <taxon>Suina</taxon>
        <taxon>Suidae</taxon>
        <taxon>Sus</taxon>
    </lineage>
</organism>
<keyword id="KW-0007">Acetylation</keyword>
<keyword id="KW-0156">Chromatin regulator</keyword>
<keyword id="KW-0158">Chromosome</keyword>
<keyword id="KW-0963">Cytoplasm</keyword>
<keyword id="KW-0206">Cytoskeleton</keyword>
<keyword id="KW-0238">DNA-binding</keyword>
<keyword id="KW-1017">Isopeptide bond</keyword>
<keyword id="KW-0446">Lipid-binding</keyword>
<keyword id="KW-0479">Metal-binding</keyword>
<keyword id="KW-0488">Methylation</keyword>
<keyword id="KW-0496">Mitochondrion</keyword>
<keyword id="KW-0539">Nucleus</keyword>
<keyword id="KW-0597">Phosphoprotein</keyword>
<keyword id="KW-0675">Receptor</keyword>
<keyword id="KW-1185">Reference proteome</keyword>
<keyword id="KW-0754">Steroid-binding</keyword>
<keyword id="KW-0804">Transcription</keyword>
<keyword id="KW-0805">Transcription regulation</keyword>
<keyword id="KW-0832">Ubl conjugation</keyword>
<keyword id="KW-0862">Zinc</keyword>
<keyword id="KW-0863">Zinc-finger</keyword>
<accession>Q9N1U3</accession>
<accession>P79405</accession>
<accession>Q5S4M0</accession>
<accession>Q9GKZ9</accession>
<reference key="1">
    <citation type="journal article" date="2006" name="Am. J. Physiol.">
        <title>PVD9902, a porcine vas deferens epithelial cell line that exhibits neurotransmitter-stimulated anion secretion and expresses numerous HCO3- transporters.</title>
        <authorList>
            <person name="Carlin R.W."/>
            <person name="Sedlacek R.L."/>
            <person name="Quesnell R.R."/>
            <person name="Pierucci-Alves F."/>
            <person name="Grieger D.M."/>
            <person name="Schultz B.D."/>
        </authorList>
    </citation>
    <scope>NUCLEOTIDE SEQUENCE [MRNA]</scope>
</reference>
<reference key="2">
    <citation type="submission" date="2000-09" db="EMBL/GenBank/DDBJ databases">
        <title>Porcine glucocorticoid receptor -- sequencing, cloning, recombinant expression and raising an antiserum.</title>
        <authorList>
            <person name="Gutscher M."/>
            <person name="Eder S."/>
            <person name="Mueller M."/>
            <person name="Claus R."/>
        </authorList>
    </citation>
    <scope>NUCLEOTIDE SEQUENCE [MRNA] OF 42-744</scope>
    <source>
        <tissue>Liver</tissue>
    </source>
</reference>
<reference key="3">
    <citation type="submission" date="1997-02" db="EMBL/GenBank/DDBJ databases">
        <title>Sus scrofa glucocorticoid receptor partial cDNA (hormone binding domain).</title>
        <authorList>
            <person name="Perreau V."/>
            <person name="Moisan M.P."/>
        </authorList>
    </citation>
    <scope>NUCLEOTIDE SEQUENCE [MRNA] OF 593-782</scope>
    <source>
        <strain>Large white</strain>
        <tissue>Hippocampus</tissue>
    </source>
</reference>